<proteinExistence type="inferred from homology"/>
<feature type="chain" id="PRO_1000165968" description="Large ribosomal subunit protein uL24">
    <location>
        <begin position="1"/>
        <end position="101"/>
    </location>
</feature>
<protein>
    <recommendedName>
        <fullName evidence="1">Large ribosomal subunit protein uL24</fullName>
    </recommendedName>
    <alternativeName>
        <fullName evidence="2">50S ribosomal protein L24</fullName>
    </alternativeName>
</protein>
<comment type="function">
    <text evidence="1">One of two assembly initiator proteins, it binds directly to the 5'-end of the 23S rRNA, where it nucleates assembly of the 50S subunit.</text>
</comment>
<comment type="function">
    <text evidence="1">One of the proteins that surrounds the polypeptide exit tunnel on the outside of the subunit.</text>
</comment>
<comment type="subunit">
    <text evidence="1">Part of the 50S ribosomal subunit.</text>
</comment>
<comment type="similarity">
    <text evidence="1">Belongs to the universal ribosomal protein uL24 family.</text>
</comment>
<accession>C1CC17</accession>
<name>RL24_STRZJ</name>
<gene>
    <name evidence="1" type="primary">rplX</name>
    <name type="ordered locus">SPJ_0230</name>
</gene>
<evidence type="ECO:0000255" key="1">
    <source>
        <dbReference type="HAMAP-Rule" id="MF_01326"/>
    </source>
</evidence>
<evidence type="ECO:0000305" key="2"/>
<keyword id="KW-0687">Ribonucleoprotein</keyword>
<keyword id="KW-0689">Ribosomal protein</keyword>
<keyword id="KW-0694">RNA-binding</keyword>
<keyword id="KW-0699">rRNA-binding</keyword>
<dbReference type="EMBL" id="CP000919">
    <property type="protein sequence ID" value="ACO19763.1"/>
    <property type="molecule type" value="Genomic_DNA"/>
</dbReference>
<dbReference type="RefSeq" id="WP_000497691.1">
    <property type="nucleotide sequence ID" value="NC_012466.1"/>
</dbReference>
<dbReference type="SMR" id="C1CC17"/>
<dbReference type="GeneID" id="93738968"/>
<dbReference type="KEGG" id="sjj:SPJ_0230"/>
<dbReference type="HOGENOM" id="CLU_093315_2_0_9"/>
<dbReference type="Proteomes" id="UP000002206">
    <property type="component" value="Chromosome"/>
</dbReference>
<dbReference type="GO" id="GO:1990904">
    <property type="term" value="C:ribonucleoprotein complex"/>
    <property type="evidence" value="ECO:0007669"/>
    <property type="project" value="UniProtKB-KW"/>
</dbReference>
<dbReference type="GO" id="GO:0005840">
    <property type="term" value="C:ribosome"/>
    <property type="evidence" value="ECO:0007669"/>
    <property type="project" value="UniProtKB-KW"/>
</dbReference>
<dbReference type="GO" id="GO:0019843">
    <property type="term" value="F:rRNA binding"/>
    <property type="evidence" value="ECO:0007669"/>
    <property type="project" value="UniProtKB-UniRule"/>
</dbReference>
<dbReference type="GO" id="GO:0003735">
    <property type="term" value="F:structural constituent of ribosome"/>
    <property type="evidence" value="ECO:0007669"/>
    <property type="project" value="InterPro"/>
</dbReference>
<dbReference type="GO" id="GO:0006412">
    <property type="term" value="P:translation"/>
    <property type="evidence" value="ECO:0007669"/>
    <property type="project" value="UniProtKB-UniRule"/>
</dbReference>
<dbReference type="CDD" id="cd06089">
    <property type="entry name" value="KOW_RPL26"/>
    <property type="match status" value="1"/>
</dbReference>
<dbReference type="FunFam" id="2.30.30.30:FF:000004">
    <property type="entry name" value="50S ribosomal protein L24"/>
    <property type="match status" value="1"/>
</dbReference>
<dbReference type="Gene3D" id="2.30.30.30">
    <property type="match status" value="1"/>
</dbReference>
<dbReference type="HAMAP" id="MF_01326_B">
    <property type="entry name" value="Ribosomal_uL24_B"/>
    <property type="match status" value="1"/>
</dbReference>
<dbReference type="InterPro" id="IPR005824">
    <property type="entry name" value="KOW"/>
</dbReference>
<dbReference type="InterPro" id="IPR014722">
    <property type="entry name" value="Rib_uL2_dom2"/>
</dbReference>
<dbReference type="InterPro" id="IPR003256">
    <property type="entry name" value="Ribosomal_uL24"/>
</dbReference>
<dbReference type="InterPro" id="IPR005825">
    <property type="entry name" value="Ribosomal_uL24_CS"/>
</dbReference>
<dbReference type="InterPro" id="IPR041988">
    <property type="entry name" value="Ribosomal_uL24_KOW"/>
</dbReference>
<dbReference type="InterPro" id="IPR008991">
    <property type="entry name" value="Translation_prot_SH3-like_sf"/>
</dbReference>
<dbReference type="NCBIfam" id="TIGR01079">
    <property type="entry name" value="rplX_bact"/>
    <property type="match status" value="1"/>
</dbReference>
<dbReference type="PANTHER" id="PTHR12903">
    <property type="entry name" value="MITOCHONDRIAL RIBOSOMAL PROTEIN L24"/>
    <property type="match status" value="1"/>
</dbReference>
<dbReference type="Pfam" id="PF00467">
    <property type="entry name" value="KOW"/>
    <property type="match status" value="1"/>
</dbReference>
<dbReference type="Pfam" id="PF17136">
    <property type="entry name" value="ribosomal_L24"/>
    <property type="match status" value="1"/>
</dbReference>
<dbReference type="SMART" id="SM00739">
    <property type="entry name" value="KOW"/>
    <property type="match status" value="1"/>
</dbReference>
<dbReference type="SUPFAM" id="SSF50104">
    <property type="entry name" value="Translation proteins SH3-like domain"/>
    <property type="match status" value="1"/>
</dbReference>
<dbReference type="PROSITE" id="PS01108">
    <property type="entry name" value="RIBOSOMAL_L24"/>
    <property type="match status" value="1"/>
</dbReference>
<sequence>MFVKKGDKVRVIAGKDKGTEAVVLTALPKVNKVIVEGVNIVKKHQRPTNELPQGGIIEKEAAIHVSNVQVLDKNGVAGRVGYKFVDGKKVRYNKKSGEVLD</sequence>
<organism>
    <name type="scientific">Streptococcus pneumoniae (strain JJA)</name>
    <dbReference type="NCBI Taxonomy" id="488222"/>
    <lineage>
        <taxon>Bacteria</taxon>
        <taxon>Bacillati</taxon>
        <taxon>Bacillota</taxon>
        <taxon>Bacilli</taxon>
        <taxon>Lactobacillales</taxon>
        <taxon>Streptococcaceae</taxon>
        <taxon>Streptococcus</taxon>
    </lineage>
</organism>
<reference key="1">
    <citation type="journal article" date="2010" name="Genome Biol.">
        <title>Structure and dynamics of the pan-genome of Streptococcus pneumoniae and closely related species.</title>
        <authorList>
            <person name="Donati C."/>
            <person name="Hiller N.L."/>
            <person name="Tettelin H."/>
            <person name="Muzzi A."/>
            <person name="Croucher N.J."/>
            <person name="Angiuoli S.V."/>
            <person name="Oggioni M."/>
            <person name="Dunning Hotopp J.C."/>
            <person name="Hu F.Z."/>
            <person name="Riley D.R."/>
            <person name="Covacci A."/>
            <person name="Mitchell T.J."/>
            <person name="Bentley S.D."/>
            <person name="Kilian M."/>
            <person name="Ehrlich G.D."/>
            <person name="Rappuoli R."/>
            <person name="Moxon E.R."/>
            <person name="Masignani V."/>
        </authorList>
    </citation>
    <scope>NUCLEOTIDE SEQUENCE [LARGE SCALE GENOMIC DNA]</scope>
    <source>
        <strain>JJA</strain>
    </source>
</reference>